<evidence type="ECO:0000250" key="1"/>
<evidence type="ECO:0000250" key="2">
    <source>
        <dbReference type="UniProtKB" id="Q03103"/>
    </source>
</evidence>
<evidence type="ECO:0000255" key="3"/>
<evidence type="ECO:0000305" key="4"/>
<dbReference type="EC" id="1.8.4.-"/>
<dbReference type="EMBL" id="AE016817">
    <property type="protein sequence ID" value="AAS51571.2"/>
    <property type="molecule type" value="Genomic_DNA"/>
</dbReference>
<dbReference type="RefSeq" id="NP_983747.2">
    <property type="nucleotide sequence ID" value="NM_209100.2"/>
</dbReference>
<dbReference type="SMR" id="Q75BB5"/>
<dbReference type="FunCoup" id="Q75BB5">
    <property type="interactions" value="822"/>
</dbReference>
<dbReference type="STRING" id="284811.Q75BB5"/>
<dbReference type="GlyCosmos" id="Q75BB5">
    <property type="glycosylation" value="3 sites, No reported glycans"/>
</dbReference>
<dbReference type="EnsemblFungi" id="AAS51571">
    <property type="protein sequence ID" value="AAS51571"/>
    <property type="gene ID" value="AGOS_ADL348W"/>
</dbReference>
<dbReference type="GeneID" id="4619882"/>
<dbReference type="KEGG" id="ago:AGOS_ADL348W"/>
<dbReference type="eggNOG" id="KOG2608">
    <property type="taxonomic scope" value="Eukaryota"/>
</dbReference>
<dbReference type="HOGENOM" id="CLU_023061_1_0_1"/>
<dbReference type="InParanoid" id="Q75BB5"/>
<dbReference type="OMA" id="CYKDRLH"/>
<dbReference type="OrthoDB" id="269384at2759"/>
<dbReference type="Proteomes" id="UP000000591">
    <property type="component" value="Chromosome IV"/>
</dbReference>
<dbReference type="GO" id="GO:0005789">
    <property type="term" value="C:endoplasmic reticulum membrane"/>
    <property type="evidence" value="ECO:0000318"/>
    <property type="project" value="GO_Central"/>
</dbReference>
<dbReference type="GO" id="GO:0071949">
    <property type="term" value="F:FAD binding"/>
    <property type="evidence" value="ECO:0007669"/>
    <property type="project" value="InterPro"/>
</dbReference>
<dbReference type="GO" id="GO:0015035">
    <property type="term" value="F:protein-disulfide reductase activity"/>
    <property type="evidence" value="ECO:0000318"/>
    <property type="project" value="GO_Central"/>
</dbReference>
<dbReference type="GO" id="GO:0016972">
    <property type="term" value="F:thiol oxidase activity"/>
    <property type="evidence" value="ECO:0007669"/>
    <property type="project" value="EnsemblFungi"/>
</dbReference>
<dbReference type="GO" id="GO:0034975">
    <property type="term" value="P:protein folding in endoplasmic reticulum"/>
    <property type="evidence" value="ECO:0000318"/>
    <property type="project" value="GO_Central"/>
</dbReference>
<dbReference type="InterPro" id="IPR007266">
    <property type="entry name" value="Ero1"/>
</dbReference>
<dbReference type="InterPro" id="IPR037192">
    <property type="entry name" value="ERO1-like_sf"/>
</dbReference>
<dbReference type="PANTHER" id="PTHR12613:SF0">
    <property type="entry name" value="ERO1-LIKE PROTEIN"/>
    <property type="match status" value="1"/>
</dbReference>
<dbReference type="PANTHER" id="PTHR12613">
    <property type="entry name" value="ERO1-RELATED"/>
    <property type="match status" value="1"/>
</dbReference>
<dbReference type="Pfam" id="PF04137">
    <property type="entry name" value="ERO1"/>
    <property type="match status" value="1"/>
</dbReference>
<dbReference type="PIRSF" id="PIRSF017205">
    <property type="entry name" value="ERO1"/>
    <property type="match status" value="1"/>
</dbReference>
<dbReference type="SUPFAM" id="SSF110019">
    <property type="entry name" value="ERO1-like"/>
    <property type="match status" value="1"/>
</dbReference>
<protein>
    <recommendedName>
        <fullName>Endoplasmic reticulum oxidoreductin-1</fullName>
        <ecNumber>1.8.4.-</ecNumber>
    </recommendedName>
</protein>
<proteinExistence type="inferred from homology"/>
<comment type="function">
    <text evidence="1">Essential oxidoreductase that oxidizes proteins in the endoplasmic reticulum to produce disulfide bonds. Acts by oxidizing directly PDI1 isomerase through a direct disulfide exchange. Does not act as a direct oxidant of folding substrate, but relies on PDI1 to transfer oxidizing equivalent. Does not oxidize all pdi related proteins, suggesting that it can discriminate between PDI1 and related proteins. Its reoxidation probably involves electron transfer to molecular oxygen via FAD. Acts independently of glutathione. May be responsible for a significant proportion of reactive oxygen species (ROS) in the cell, thereby being a source of oxidative stress (By similarity).</text>
</comment>
<comment type="cofactor">
    <cofactor evidence="2">
        <name>FAD</name>
        <dbReference type="ChEBI" id="CHEBI:57692"/>
    </cofactor>
</comment>
<comment type="subunit">
    <text evidence="1">May function both as a monomer and a homodimer.</text>
</comment>
<comment type="subcellular location">
    <subcellularLocation>
        <location evidence="1">Endoplasmic reticulum membrane</location>
        <topology evidence="1">Peripheral membrane protein</topology>
        <orientation evidence="1">Lumenal side</orientation>
    </subcellularLocation>
</comment>
<comment type="similarity">
    <text evidence="4">Belongs to the EROs family.</text>
</comment>
<gene>
    <name type="primary">ERO1</name>
    <name type="ordered locus">ADL348W</name>
</gene>
<feature type="signal peptide" evidence="3">
    <location>
        <begin position="1"/>
        <end position="18"/>
    </location>
</feature>
<feature type="chain" id="PRO_0000008424" description="Endoplasmic reticulum oxidoreductin-1">
    <location>
        <begin position="19"/>
        <end position="546"/>
    </location>
</feature>
<feature type="active site" description="Nucleophile" evidence="2">
    <location>
        <position position="347"/>
    </location>
</feature>
<feature type="active site" evidence="2">
    <location>
        <position position="350"/>
    </location>
</feature>
<feature type="binding site" evidence="2">
    <location>
        <position position="182"/>
    </location>
    <ligand>
        <name>FAD</name>
        <dbReference type="ChEBI" id="CHEBI:57692"/>
    </ligand>
</feature>
<feature type="binding site" evidence="2">
    <location>
        <position position="184"/>
    </location>
    <ligand>
        <name>FAD</name>
        <dbReference type="ChEBI" id="CHEBI:57692"/>
    </ligand>
</feature>
<feature type="binding site" evidence="2">
    <location>
        <position position="195"/>
    </location>
    <ligand>
        <name>FAD</name>
        <dbReference type="ChEBI" id="CHEBI:57692"/>
    </ligand>
</feature>
<feature type="binding site" evidence="2">
    <location>
        <position position="223"/>
    </location>
    <ligand>
        <name>FAD</name>
        <dbReference type="ChEBI" id="CHEBI:57692"/>
    </ligand>
</feature>
<feature type="binding site" evidence="2">
    <location>
        <position position="226"/>
    </location>
    <ligand>
        <name>FAD</name>
        <dbReference type="ChEBI" id="CHEBI:57692"/>
    </ligand>
</feature>
<feature type="binding site" evidence="2">
    <location>
        <position position="255"/>
    </location>
    <ligand>
        <name>FAD</name>
        <dbReference type="ChEBI" id="CHEBI:57692"/>
    </ligand>
</feature>
<feature type="glycosylation site" description="N-linked (GlcNAc...) asparagine" evidence="3">
    <location>
        <position position="337"/>
    </location>
</feature>
<feature type="glycosylation site" description="N-linked (GlcNAc...) asparagine" evidence="3">
    <location>
        <position position="422"/>
    </location>
</feature>
<feature type="glycosylation site" description="N-linked (GlcNAc...) asparagine" evidence="3">
    <location>
        <position position="449"/>
    </location>
</feature>
<feature type="disulfide bond" evidence="2">
    <location>
        <begin position="84"/>
        <end position="344"/>
    </location>
</feature>
<feature type="disulfide bond" description="Redox-active" evidence="2">
    <location>
        <begin position="94"/>
        <end position="99"/>
    </location>
</feature>
<feature type="disulfide bond" evidence="2">
    <location>
        <begin position="137"/>
        <end position="161"/>
    </location>
</feature>
<feature type="disulfide bond" evidence="2">
    <location>
        <begin position="144"/>
        <end position="290"/>
    </location>
</feature>
<feature type="disulfide bond" description="Redox-active" evidence="2">
    <location>
        <begin position="347"/>
        <end position="350"/>
    </location>
</feature>
<keyword id="KW-1015">Disulfide bond</keyword>
<keyword id="KW-0249">Electron transport</keyword>
<keyword id="KW-0256">Endoplasmic reticulum</keyword>
<keyword id="KW-0274">FAD</keyword>
<keyword id="KW-0285">Flavoprotein</keyword>
<keyword id="KW-0325">Glycoprotein</keyword>
<keyword id="KW-0472">Membrane</keyword>
<keyword id="KW-0560">Oxidoreductase</keyword>
<keyword id="KW-0676">Redox-active center</keyword>
<keyword id="KW-1185">Reference proteome</keyword>
<keyword id="KW-0732">Signal</keyword>
<keyword id="KW-0813">Transport</keyword>
<reference key="1">
    <citation type="journal article" date="2004" name="Science">
        <title>The Ashbya gossypii genome as a tool for mapping the ancient Saccharomyces cerevisiae genome.</title>
        <authorList>
            <person name="Dietrich F.S."/>
            <person name="Voegeli S."/>
            <person name="Brachat S."/>
            <person name="Lerch A."/>
            <person name="Gates K."/>
            <person name="Steiner S."/>
            <person name="Mohr C."/>
            <person name="Poehlmann R."/>
            <person name="Luedi P."/>
            <person name="Choi S."/>
            <person name="Wing R.A."/>
            <person name="Flavier A."/>
            <person name="Gaffney T.D."/>
            <person name="Philippsen P."/>
        </authorList>
    </citation>
    <scope>NUCLEOTIDE SEQUENCE [LARGE SCALE GENOMIC DNA]</scope>
    <source>
        <strain>ATCC 10895 / CBS 109.51 / FGSC 9923 / NRRL Y-1056</strain>
    </source>
</reference>
<reference key="2">
    <citation type="journal article" date="2013" name="G3 (Bethesda)">
        <title>Genomes of Ashbya fungi isolated from insects reveal four mating-type loci, numerous translocations, lack of transposons, and distinct gene duplications.</title>
        <authorList>
            <person name="Dietrich F.S."/>
            <person name="Voegeli S."/>
            <person name="Kuo S."/>
            <person name="Philippsen P."/>
        </authorList>
    </citation>
    <scope>GENOME REANNOTATION</scope>
    <scope>SEQUENCE REVISION TO 193</scope>
    <source>
        <strain>ATCC 10895 / CBS 109.51 / FGSC 9923 / NRRL Y-1056</strain>
    </source>
</reference>
<accession>Q75BB5</accession>
<name>ERO1_EREGS</name>
<organism>
    <name type="scientific">Eremothecium gossypii (strain ATCC 10895 / CBS 109.51 / FGSC 9923 / NRRL Y-1056)</name>
    <name type="common">Yeast</name>
    <name type="synonym">Ashbya gossypii</name>
    <dbReference type="NCBI Taxonomy" id="284811"/>
    <lineage>
        <taxon>Eukaryota</taxon>
        <taxon>Fungi</taxon>
        <taxon>Dikarya</taxon>
        <taxon>Ascomycota</taxon>
        <taxon>Saccharomycotina</taxon>
        <taxon>Saccharomycetes</taxon>
        <taxon>Saccharomycetales</taxon>
        <taxon>Saccharomycetaceae</taxon>
        <taxon>Eremothecium</taxon>
    </lineage>
</organism>
<sequence>MQLNKLMLGFMLCASALADDGQQAAEPHTSANFCKIDKDQQVGSTCDITFHELNEINEQIRPQLARLVKTDFFRYFKLDLYKECPFWSDNNGYCVNRACAVDVVDDWESVPDIWQPEVLGGLDEDSVKSEGGESDECSFLNELCGRRREFARPEPLSIDYCDVTDFTNKDSVLVDLVANPERFTGYGGEQSAQIWSAIYKENCFTLGEQGFCLAKDVFYRLISGLHASIATHLSNDYLDTKTGKWGPNLELFMARVGNHPDRVANIYFNFAVVAKALWKIQPYLERVEFCNVYDTNVKDMISNVVSRLDSRVFNEDLLFQDDISMRMKDDFRRRFKNVTKIMDCVHCDRCRMWGKVQTTGYATSLKILFEMDAGDEKARQRVVDKLTKYELIGLFNTFDRISKSVNAINNFERMYHSQMETNTSSIAAFFQNNFFRLGFTETEDQETSNATADMPLPEDSASDNEPYFADLKIPARRSKKQTKEESTSALQQELQGVYHALQFIWNSYVNLPRNLLILVLDVANTWFNNFIGVPTQINILGDDASD</sequence>